<comment type="function">
    <text evidence="1">The coatomer is a cytosolic protein complex that binds to dilysine motifs and reversibly associates with Golgi non-clathrin-coated vesicles, which further mediate biosynthetic protein transport from the ER, via the Golgi up to the trans Golgi network. Coatomer complex is required for budding from Golgi membranes, and is essential for the retrograde Golgi-to-ER transport of dilysine-tagged proteins. In mammals, the coatomer can only be recruited by membranes associated to ADP-ribosylation factors (ARFs), which are small GTP-binding proteins; the complex also influences the Golgi structural integrity, as well as the processing, activity, and endocytic recycling of LDL receptors (By similarity).</text>
</comment>
<comment type="subunit">
    <text evidence="1">Oligomeric complex that consists of at least the alpha, beta, beta', gamma, delta, epsilon and zeta subunits.</text>
</comment>
<comment type="subcellular location">
    <subcellularLocation>
        <location evidence="1">Cytoplasm</location>
    </subcellularLocation>
    <subcellularLocation>
        <location evidence="1">Golgi apparatus membrane</location>
        <topology evidence="1">Peripheral membrane protein</topology>
        <orientation evidence="1">Cytoplasmic side</orientation>
    </subcellularLocation>
    <subcellularLocation>
        <location evidence="1">Cytoplasmic vesicle</location>
        <location evidence="1">COPI-coated vesicle membrane</location>
        <topology evidence="1">Peripheral membrane protein</topology>
        <orientation evidence="1">Cytoplasmic side</orientation>
    </subcellularLocation>
    <text evidence="1">The coatomer is cytoplasmic or polymerized on the cytoplasmic side of the Golgi, as well as on the vesicles/buds originating from it.</text>
</comment>
<comment type="similarity">
    <text evidence="5">Belongs to the adaptor complexes medium subunit family. Delta-COP subfamily.</text>
</comment>
<gene>
    <name type="primary">Arcn1</name>
    <name type="synonym">Copd</name>
</gene>
<keyword id="KW-0002">3D-structure</keyword>
<keyword id="KW-0007">Acetylation</keyword>
<keyword id="KW-0963">Cytoplasm</keyword>
<keyword id="KW-0968">Cytoplasmic vesicle</keyword>
<keyword id="KW-0931">ER-Golgi transport</keyword>
<keyword id="KW-0333">Golgi apparatus</keyword>
<keyword id="KW-0472">Membrane</keyword>
<keyword id="KW-0597">Phosphoprotein</keyword>
<keyword id="KW-0653">Protein transport</keyword>
<keyword id="KW-1185">Reference proteome</keyword>
<keyword id="KW-0813">Transport</keyword>
<dbReference type="EMBL" id="AK028556">
    <property type="protein sequence ID" value="BAC26007.1"/>
    <property type="molecule type" value="mRNA"/>
</dbReference>
<dbReference type="EMBL" id="CH466522">
    <property type="protein sequence ID" value="EDL25614.1"/>
    <property type="molecule type" value="Genomic_DNA"/>
</dbReference>
<dbReference type="EMBL" id="BC017124">
    <property type="protein sequence ID" value="AAH17124.1"/>
    <property type="molecule type" value="mRNA"/>
</dbReference>
<dbReference type="EMBL" id="BC023728">
    <property type="protein sequence ID" value="AAH23728.1"/>
    <property type="molecule type" value="mRNA"/>
</dbReference>
<dbReference type="EMBL" id="BC033387">
    <property type="protein sequence ID" value="AAH33387.1"/>
    <property type="molecule type" value="mRNA"/>
</dbReference>
<dbReference type="EMBL" id="BC034754">
    <property type="protein sequence ID" value="AAH34754.1"/>
    <property type="molecule type" value="mRNA"/>
</dbReference>
<dbReference type="EMBL" id="BC083152">
    <property type="protein sequence ID" value="AAH83152.1"/>
    <property type="molecule type" value="mRNA"/>
</dbReference>
<dbReference type="CCDS" id="CCDS40602.1"/>
<dbReference type="RefSeq" id="NP_666097.3">
    <property type="nucleotide sequence ID" value="NM_145985.4"/>
</dbReference>
<dbReference type="PDB" id="5A1U">
    <property type="method" value="EM"/>
    <property type="resolution" value="13.00 A"/>
    <property type="chains" value="H=1-511"/>
</dbReference>
<dbReference type="PDB" id="5A1V">
    <property type="method" value="EM"/>
    <property type="resolution" value="21.00 A"/>
    <property type="chains" value="H/P/Y=1-511"/>
</dbReference>
<dbReference type="PDB" id="5A1W">
    <property type="method" value="EM"/>
    <property type="resolution" value="18.00 A"/>
    <property type="chains" value="H=1-511"/>
</dbReference>
<dbReference type="PDB" id="5A1X">
    <property type="method" value="EM"/>
    <property type="resolution" value="23.00 A"/>
    <property type="chains" value="H/P/Q=1-511"/>
</dbReference>
<dbReference type="PDB" id="5A1Y">
    <property type="method" value="EM"/>
    <property type="resolution" value="21.00 A"/>
    <property type="chains" value="H/P=1-511"/>
</dbReference>
<dbReference type="PDB" id="5NZR">
    <property type="method" value="EM"/>
    <property type="resolution" value="9.20 A"/>
    <property type="chains" value="D=1-511"/>
</dbReference>
<dbReference type="PDB" id="5NZS">
    <property type="method" value="EM"/>
    <property type="resolution" value="10.10 A"/>
    <property type="chains" value="D=1-511"/>
</dbReference>
<dbReference type="PDB" id="5NZT">
    <property type="method" value="EM"/>
    <property type="resolution" value="17.00 A"/>
    <property type="chains" value="D/I=1-511"/>
</dbReference>
<dbReference type="PDB" id="5NZU">
    <property type="method" value="EM"/>
    <property type="resolution" value="15.00 A"/>
    <property type="chains" value="D=1-511"/>
</dbReference>
<dbReference type="PDB" id="5NZV">
    <property type="method" value="EM"/>
    <property type="resolution" value="17.30 A"/>
    <property type="chains" value="D/N=1-511"/>
</dbReference>
<dbReference type="PDBsum" id="5A1U"/>
<dbReference type="PDBsum" id="5A1V"/>
<dbReference type="PDBsum" id="5A1W"/>
<dbReference type="PDBsum" id="5A1X"/>
<dbReference type="PDBsum" id="5A1Y"/>
<dbReference type="PDBsum" id="5NZR"/>
<dbReference type="PDBsum" id="5NZS"/>
<dbReference type="PDBsum" id="5NZT"/>
<dbReference type="PDBsum" id="5NZU"/>
<dbReference type="PDBsum" id="5NZV"/>
<dbReference type="EMDB" id="EMD-3720"/>
<dbReference type="EMDB" id="EMD-3721"/>
<dbReference type="EMDB" id="EMD-3722"/>
<dbReference type="EMDB" id="EMD-3723"/>
<dbReference type="EMDB" id="EMD-3724"/>
<dbReference type="SMR" id="Q5XJY5"/>
<dbReference type="BioGRID" id="229475">
    <property type="interactions" value="21"/>
</dbReference>
<dbReference type="CORUM" id="Q5XJY5"/>
<dbReference type="FunCoup" id="Q5XJY5">
    <property type="interactions" value="3869"/>
</dbReference>
<dbReference type="IntAct" id="Q5XJY5">
    <property type="interactions" value="2"/>
</dbReference>
<dbReference type="MINT" id="Q5XJY5"/>
<dbReference type="STRING" id="10090.ENSMUSP00000034607"/>
<dbReference type="GlyGen" id="Q5XJY5">
    <property type="glycosylation" value="1 site, 1 O-linked glycan (1 site)"/>
</dbReference>
<dbReference type="iPTMnet" id="Q5XJY5"/>
<dbReference type="PhosphoSitePlus" id="Q5XJY5"/>
<dbReference type="SwissPalm" id="Q5XJY5"/>
<dbReference type="REPRODUCTION-2DPAGE" id="Q5XJY5"/>
<dbReference type="jPOST" id="Q5XJY5"/>
<dbReference type="PaxDb" id="10090-ENSMUSP00000034607"/>
<dbReference type="PeptideAtlas" id="Q5XJY5"/>
<dbReference type="ProteomicsDB" id="283492"/>
<dbReference type="Pumba" id="Q5XJY5"/>
<dbReference type="Antibodypedia" id="32504">
    <property type="antibodies" value="217 antibodies from 24 providers"/>
</dbReference>
<dbReference type="DNASU" id="213827"/>
<dbReference type="Ensembl" id="ENSMUST00000034607.10">
    <property type="protein sequence ID" value="ENSMUSP00000034607.10"/>
    <property type="gene ID" value="ENSMUSG00000032096.17"/>
</dbReference>
<dbReference type="GeneID" id="213827"/>
<dbReference type="KEGG" id="mmu:213827"/>
<dbReference type="UCSC" id="uc009pei.2">
    <property type="organism name" value="mouse"/>
</dbReference>
<dbReference type="AGR" id="MGI:2387591"/>
<dbReference type="CTD" id="372"/>
<dbReference type="MGI" id="MGI:2387591">
    <property type="gene designation" value="Arcn1"/>
</dbReference>
<dbReference type="VEuPathDB" id="HostDB:ENSMUSG00000032096"/>
<dbReference type="eggNOG" id="KOG2635">
    <property type="taxonomic scope" value="Eukaryota"/>
</dbReference>
<dbReference type="GeneTree" id="ENSGT00390000017207"/>
<dbReference type="HOGENOM" id="CLU_019988_3_0_1"/>
<dbReference type="InParanoid" id="Q5XJY5"/>
<dbReference type="OMA" id="VQFRTHP"/>
<dbReference type="OrthoDB" id="10266042at2759"/>
<dbReference type="PhylomeDB" id="Q5XJY5"/>
<dbReference type="TreeFam" id="TF105760"/>
<dbReference type="Reactome" id="R-MMU-6807878">
    <property type="pathway name" value="COPI-mediated anterograde transport"/>
</dbReference>
<dbReference type="Reactome" id="R-MMU-6811434">
    <property type="pathway name" value="COPI-dependent Golgi-to-ER retrograde traffic"/>
</dbReference>
<dbReference type="BioGRID-ORCS" id="213827">
    <property type="hits" value="25 hits in 77 CRISPR screens"/>
</dbReference>
<dbReference type="ChiTaRS" id="Arcn1">
    <property type="organism name" value="mouse"/>
</dbReference>
<dbReference type="EvolutionaryTrace" id="Q5XJY5"/>
<dbReference type="PRO" id="PR:Q5XJY5"/>
<dbReference type="Proteomes" id="UP000000589">
    <property type="component" value="Chromosome 9"/>
</dbReference>
<dbReference type="RNAct" id="Q5XJY5">
    <property type="molecule type" value="protein"/>
</dbReference>
<dbReference type="Bgee" id="ENSMUSG00000032096">
    <property type="expression patterns" value="Expressed in seminal vesicle and 256 other cell types or tissues"/>
</dbReference>
<dbReference type="GO" id="GO:0030126">
    <property type="term" value="C:COPI vesicle coat"/>
    <property type="evidence" value="ECO:0007669"/>
    <property type="project" value="InterPro"/>
</dbReference>
<dbReference type="GO" id="GO:0030137">
    <property type="term" value="C:COPI-coated vesicle"/>
    <property type="evidence" value="ECO:0000314"/>
    <property type="project" value="MGI"/>
</dbReference>
<dbReference type="GO" id="GO:0005783">
    <property type="term" value="C:endoplasmic reticulum"/>
    <property type="evidence" value="ECO:0000314"/>
    <property type="project" value="MGI"/>
</dbReference>
<dbReference type="GO" id="GO:0005794">
    <property type="term" value="C:Golgi apparatus"/>
    <property type="evidence" value="ECO:0000314"/>
    <property type="project" value="MGI"/>
</dbReference>
<dbReference type="GO" id="GO:0000139">
    <property type="term" value="C:Golgi membrane"/>
    <property type="evidence" value="ECO:0007669"/>
    <property type="project" value="UniProtKB-SubCell"/>
</dbReference>
<dbReference type="GO" id="GO:0008344">
    <property type="term" value="P:adult locomotory behavior"/>
    <property type="evidence" value="ECO:0000315"/>
    <property type="project" value="MGI"/>
</dbReference>
<dbReference type="GO" id="GO:0021691">
    <property type="term" value="P:cerebellar Purkinje cell layer maturation"/>
    <property type="evidence" value="ECO:0000315"/>
    <property type="project" value="MGI"/>
</dbReference>
<dbReference type="GO" id="GO:0051649">
    <property type="term" value="P:establishment of localization in cell"/>
    <property type="evidence" value="ECO:0000315"/>
    <property type="project" value="MGI"/>
</dbReference>
<dbReference type="GO" id="GO:0048193">
    <property type="term" value="P:Golgi vesicle transport"/>
    <property type="evidence" value="ECO:0000315"/>
    <property type="project" value="MGI"/>
</dbReference>
<dbReference type="GO" id="GO:0043473">
    <property type="term" value="P:pigmentation"/>
    <property type="evidence" value="ECO:0000315"/>
    <property type="project" value="MGI"/>
</dbReference>
<dbReference type="GO" id="GO:0015031">
    <property type="term" value="P:protein transport"/>
    <property type="evidence" value="ECO:0007669"/>
    <property type="project" value="UniProtKB-KW"/>
</dbReference>
<dbReference type="GO" id="GO:0006890">
    <property type="term" value="P:retrograde vesicle-mediated transport, Golgi to endoplasmic reticulum"/>
    <property type="evidence" value="ECO:0007669"/>
    <property type="project" value="InterPro"/>
</dbReference>
<dbReference type="CDD" id="cd09254">
    <property type="entry name" value="AP_delta-COPI_MHD"/>
    <property type="match status" value="1"/>
</dbReference>
<dbReference type="CDD" id="cd14830">
    <property type="entry name" value="Delta_COP_N"/>
    <property type="match status" value="1"/>
</dbReference>
<dbReference type="DisProt" id="DP01657"/>
<dbReference type="FunFam" id="2.60.40.1170:FF:000007">
    <property type="entry name" value="Coatomer subunit delta"/>
    <property type="match status" value="1"/>
</dbReference>
<dbReference type="FunFam" id="2.60.40.1170:FF:000011">
    <property type="entry name" value="Coatomer subunit delta"/>
    <property type="match status" value="1"/>
</dbReference>
<dbReference type="FunFam" id="3.30.450.60:FF:000003">
    <property type="entry name" value="Coatomer subunit delta"/>
    <property type="match status" value="1"/>
</dbReference>
<dbReference type="Gene3D" id="3.30.450.60">
    <property type="match status" value="1"/>
</dbReference>
<dbReference type="Gene3D" id="2.60.40.1170">
    <property type="entry name" value="Mu homology domain, subdomain B"/>
    <property type="match status" value="2"/>
</dbReference>
<dbReference type="InterPro" id="IPR036168">
    <property type="entry name" value="AP2_Mu_C_sf"/>
</dbReference>
<dbReference type="InterPro" id="IPR022775">
    <property type="entry name" value="AP_mu_sigma_su"/>
</dbReference>
<dbReference type="InterPro" id="IPR027059">
    <property type="entry name" value="Coatomer_dsu"/>
</dbReference>
<dbReference type="InterPro" id="IPR011012">
    <property type="entry name" value="Longin-like_dom_sf"/>
</dbReference>
<dbReference type="InterPro" id="IPR028565">
    <property type="entry name" value="MHD"/>
</dbReference>
<dbReference type="PANTHER" id="PTHR10121">
    <property type="entry name" value="COATOMER SUBUNIT DELTA"/>
    <property type="match status" value="1"/>
</dbReference>
<dbReference type="PANTHER" id="PTHR10121:SF0">
    <property type="entry name" value="COATOMER SUBUNIT DELTA"/>
    <property type="match status" value="1"/>
</dbReference>
<dbReference type="Pfam" id="PF00928">
    <property type="entry name" value="Adap_comp_sub"/>
    <property type="match status" value="1"/>
</dbReference>
<dbReference type="Pfam" id="PF01217">
    <property type="entry name" value="Clat_adaptor_s"/>
    <property type="match status" value="1"/>
</dbReference>
<dbReference type="SUPFAM" id="SSF49447">
    <property type="entry name" value="Second domain of Mu2 adaptin subunit (ap50) of ap2 adaptor"/>
    <property type="match status" value="1"/>
</dbReference>
<dbReference type="SUPFAM" id="SSF64356">
    <property type="entry name" value="SNARE-like"/>
    <property type="match status" value="1"/>
</dbReference>
<dbReference type="PROSITE" id="PS51072">
    <property type="entry name" value="MHD"/>
    <property type="match status" value="1"/>
</dbReference>
<proteinExistence type="evidence at protein level"/>
<evidence type="ECO:0000250" key="1"/>
<evidence type="ECO:0000250" key="2">
    <source>
        <dbReference type="UniProtKB" id="P48444"/>
    </source>
</evidence>
<evidence type="ECO:0000255" key="3">
    <source>
        <dbReference type="PROSITE-ProRule" id="PRU00404"/>
    </source>
</evidence>
<evidence type="ECO:0000256" key="4">
    <source>
        <dbReference type="SAM" id="MobiDB-lite"/>
    </source>
</evidence>
<evidence type="ECO:0000305" key="5"/>
<evidence type="ECO:0007744" key="6">
    <source>
    </source>
</evidence>
<sequence>MVLLAAAVCTKAGKAIVSRQFVEMTRTRIEGLLAAFPKLMNTGKQHTFVETESVRYVYQPMEKLYMVLITTKNSNILEDLETLRLFSRVIPEYCRALEENEISEHCFDLIFAFDEIVALGYRENVNLAQIRTFTEMDSHEEKVFRAVRETQEREAKAEMRRKAKELQQARRDAERQGKKAPGFGGFGSSAVSGGSTAAMITETIIETDKPKVAPAPARPSGPSKALKLGAKGKEVDNFVDKLKSEGETIMSSNMGKRTSEATKVHAPPINMESVHMKIEEKITLTCGRDGGLQNMELHGMIMLRISDDKFGRIRLHVENEDKKGVQLQTHPNVDKKLFTAESLIGLKNPEKSFPVNSDVGVLKWRLQTTEESFIPLTINCWPSESGNGCDVNIEYELQEDNLELNDVVITIPLPSGVGAPVIGEIDGEYRHDSRRNTLEWCLPVIDAKNKSGSLEFSIPGQPNDFFPVQVSFISKKNYCNIQVTKVTQVDGNSPVRFSTETTFLVDKYEIL</sequence>
<name>COPD_MOUSE</name>
<reference key="1">
    <citation type="journal article" date="2005" name="Science">
        <title>The transcriptional landscape of the mammalian genome.</title>
        <authorList>
            <person name="Carninci P."/>
            <person name="Kasukawa T."/>
            <person name="Katayama S."/>
            <person name="Gough J."/>
            <person name="Frith M.C."/>
            <person name="Maeda N."/>
            <person name="Oyama R."/>
            <person name="Ravasi T."/>
            <person name="Lenhard B."/>
            <person name="Wells C."/>
            <person name="Kodzius R."/>
            <person name="Shimokawa K."/>
            <person name="Bajic V.B."/>
            <person name="Brenner S.E."/>
            <person name="Batalov S."/>
            <person name="Forrest A.R."/>
            <person name="Zavolan M."/>
            <person name="Davis M.J."/>
            <person name="Wilming L.G."/>
            <person name="Aidinis V."/>
            <person name="Allen J.E."/>
            <person name="Ambesi-Impiombato A."/>
            <person name="Apweiler R."/>
            <person name="Aturaliya R.N."/>
            <person name="Bailey T.L."/>
            <person name="Bansal M."/>
            <person name="Baxter L."/>
            <person name="Beisel K.W."/>
            <person name="Bersano T."/>
            <person name="Bono H."/>
            <person name="Chalk A.M."/>
            <person name="Chiu K.P."/>
            <person name="Choudhary V."/>
            <person name="Christoffels A."/>
            <person name="Clutterbuck D.R."/>
            <person name="Crowe M.L."/>
            <person name="Dalla E."/>
            <person name="Dalrymple B.P."/>
            <person name="de Bono B."/>
            <person name="Della Gatta G."/>
            <person name="di Bernardo D."/>
            <person name="Down T."/>
            <person name="Engstrom P."/>
            <person name="Fagiolini M."/>
            <person name="Faulkner G."/>
            <person name="Fletcher C.F."/>
            <person name="Fukushima T."/>
            <person name="Furuno M."/>
            <person name="Futaki S."/>
            <person name="Gariboldi M."/>
            <person name="Georgii-Hemming P."/>
            <person name="Gingeras T.R."/>
            <person name="Gojobori T."/>
            <person name="Green R.E."/>
            <person name="Gustincich S."/>
            <person name="Harbers M."/>
            <person name="Hayashi Y."/>
            <person name="Hensch T.K."/>
            <person name="Hirokawa N."/>
            <person name="Hill D."/>
            <person name="Huminiecki L."/>
            <person name="Iacono M."/>
            <person name="Ikeo K."/>
            <person name="Iwama A."/>
            <person name="Ishikawa T."/>
            <person name="Jakt M."/>
            <person name="Kanapin A."/>
            <person name="Katoh M."/>
            <person name="Kawasawa Y."/>
            <person name="Kelso J."/>
            <person name="Kitamura H."/>
            <person name="Kitano H."/>
            <person name="Kollias G."/>
            <person name="Krishnan S.P."/>
            <person name="Kruger A."/>
            <person name="Kummerfeld S.K."/>
            <person name="Kurochkin I.V."/>
            <person name="Lareau L.F."/>
            <person name="Lazarevic D."/>
            <person name="Lipovich L."/>
            <person name="Liu J."/>
            <person name="Liuni S."/>
            <person name="McWilliam S."/>
            <person name="Madan Babu M."/>
            <person name="Madera M."/>
            <person name="Marchionni L."/>
            <person name="Matsuda H."/>
            <person name="Matsuzawa S."/>
            <person name="Miki H."/>
            <person name="Mignone F."/>
            <person name="Miyake S."/>
            <person name="Morris K."/>
            <person name="Mottagui-Tabar S."/>
            <person name="Mulder N."/>
            <person name="Nakano N."/>
            <person name="Nakauchi H."/>
            <person name="Ng P."/>
            <person name="Nilsson R."/>
            <person name="Nishiguchi S."/>
            <person name="Nishikawa S."/>
            <person name="Nori F."/>
            <person name="Ohara O."/>
            <person name="Okazaki Y."/>
            <person name="Orlando V."/>
            <person name="Pang K.C."/>
            <person name="Pavan W.J."/>
            <person name="Pavesi G."/>
            <person name="Pesole G."/>
            <person name="Petrovsky N."/>
            <person name="Piazza S."/>
            <person name="Reed J."/>
            <person name="Reid J.F."/>
            <person name="Ring B.Z."/>
            <person name="Ringwald M."/>
            <person name="Rost B."/>
            <person name="Ruan Y."/>
            <person name="Salzberg S.L."/>
            <person name="Sandelin A."/>
            <person name="Schneider C."/>
            <person name="Schoenbach C."/>
            <person name="Sekiguchi K."/>
            <person name="Semple C.A."/>
            <person name="Seno S."/>
            <person name="Sessa L."/>
            <person name="Sheng Y."/>
            <person name="Shibata Y."/>
            <person name="Shimada H."/>
            <person name="Shimada K."/>
            <person name="Silva D."/>
            <person name="Sinclair B."/>
            <person name="Sperling S."/>
            <person name="Stupka E."/>
            <person name="Sugiura K."/>
            <person name="Sultana R."/>
            <person name="Takenaka Y."/>
            <person name="Taki K."/>
            <person name="Tammoja K."/>
            <person name="Tan S.L."/>
            <person name="Tang S."/>
            <person name="Taylor M.S."/>
            <person name="Tegner J."/>
            <person name="Teichmann S.A."/>
            <person name="Ueda H.R."/>
            <person name="van Nimwegen E."/>
            <person name="Verardo R."/>
            <person name="Wei C.L."/>
            <person name="Yagi K."/>
            <person name="Yamanishi H."/>
            <person name="Zabarovsky E."/>
            <person name="Zhu S."/>
            <person name="Zimmer A."/>
            <person name="Hide W."/>
            <person name="Bult C."/>
            <person name="Grimmond S.M."/>
            <person name="Teasdale R.D."/>
            <person name="Liu E.T."/>
            <person name="Brusic V."/>
            <person name="Quackenbush J."/>
            <person name="Wahlestedt C."/>
            <person name="Mattick J.S."/>
            <person name="Hume D.A."/>
            <person name="Kai C."/>
            <person name="Sasaki D."/>
            <person name="Tomaru Y."/>
            <person name="Fukuda S."/>
            <person name="Kanamori-Katayama M."/>
            <person name="Suzuki M."/>
            <person name="Aoki J."/>
            <person name="Arakawa T."/>
            <person name="Iida J."/>
            <person name="Imamura K."/>
            <person name="Itoh M."/>
            <person name="Kato T."/>
            <person name="Kawaji H."/>
            <person name="Kawagashira N."/>
            <person name="Kawashima T."/>
            <person name="Kojima M."/>
            <person name="Kondo S."/>
            <person name="Konno H."/>
            <person name="Nakano K."/>
            <person name="Ninomiya N."/>
            <person name="Nishio T."/>
            <person name="Okada M."/>
            <person name="Plessy C."/>
            <person name="Shibata K."/>
            <person name="Shiraki T."/>
            <person name="Suzuki S."/>
            <person name="Tagami M."/>
            <person name="Waki K."/>
            <person name="Watahiki A."/>
            <person name="Okamura-Oho Y."/>
            <person name="Suzuki H."/>
            <person name="Kawai J."/>
            <person name="Hayashizaki Y."/>
        </authorList>
    </citation>
    <scope>NUCLEOTIDE SEQUENCE [LARGE SCALE MRNA]</scope>
    <source>
        <strain>C57BL/6J</strain>
        <tissue>Skin</tissue>
    </source>
</reference>
<reference key="2">
    <citation type="submission" date="2005-07" db="EMBL/GenBank/DDBJ databases">
        <authorList>
            <person name="Mural R.J."/>
            <person name="Adams M.D."/>
            <person name="Myers E.W."/>
            <person name="Smith H.O."/>
            <person name="Venter J.C."/>
        </authorList>
    </citation>
    <scope>NUCLEOTIDE SEQUENCE [LARGE SCALE GENOMIC DNA]</scope>
</reference>
<reference key="3">
    <citation type="journal article" date="2004" name="Genome Res.">
        <title>The status, quality, and expansion of the NIH full-length cDNA project: the Mammalian Gene Collection (MGC).</title>
        <authorList>
            <consortium name="The MGC Project Team"/>
        </authorList>
    </citation>
    <scope>NUCLEOTIDE SEQUENCE [LARGE SCALE MRNA]</scope>
    <source>
        <strain>C57BL/6J</strain>
        <strain>FVB/N</strain>
        <tissue>Embryonic germ cell</tissue>
        <tissue>Eye</tissue>
        <tissue>Mammary tumor</tissue>
    </source>
</reference>
<reference key="4">
    <citation type="journal article" date="2010" name="Cell">
        <title>A tissue-specific atlas of mouse protein phosphorylation and expression.</title>
        <authorList>
            <person name="Huttlin E.L."/>
            <person name="Jedrychowski M.P."/>
            <person name="Elias J.E."/>
            <person name="Goswami T."/>
            <person name="Rad R."/>
            <person name="Beausoleil S.A."/>
            <person name="Villen J."/>
            <person name="Haas W."/>
            <person name="Sowa M.E."/>
            <person name="Gygi S.P."/>
        </authorList>
    </citation>
    <scope>IDENTIFICATION BY MASS SPECTROMETRY [LARGE SCALE ANALYSIS]</scope>
    <source>
        <tissue>Brain</tissue>
        <tissue>Brown adipose tissue</tissue>
        <tissue>Heart</tissue>
        <tissue>Kidney</tissue>
        <tissue>Liver</tissue>
        <tissue>Lung</tissue>
        <tissue>Pancreas</tissue>
        <tissue>Spleen</tissue>
        <tissue>Testis</tissue>
    </source>
</reference>
<reference key="5">
    <citation type="journal article" date="2013" name="Mol. Cell">
        <title>SIRT5-mediated lysine desuccinylation impacts diverse metabolic pathways.</title>
        <authorList>
            <person name="Park J."/>
            <person name="Chen Y."/>
            <person name="Tishkoff D.X."/>
            <person name="Peng C."/>
            <person name="Tan M."/>
            <person name="Dai L."/>
            <person name="Xie Z."/>
            <person name="Zhang Y."/>
            <person name="Zwaans B.M."/>
            <person name="Skinner M.E."/>
            <person name="Lombard D.B."/>
            <person name="Zhao Y."/>
        </authorList>
    </citation>
    <scope>ACETYLATION [LARGE SCALE ANALYSIS] AT LYS-241 AND LYS-351</scope>
    <scope>IDENTIFICATION BY MASS SPECTROMETRY [LARGE SCALE ANALYSIS]</scope>
    <source>
        <tissue>Embryonic fibroblast</tissue>
    </source>
</reference>
<protein>
    <recommendedName>
        <fullName>Coatomer subunit delta</fullName>
    </recommendedName>
    <alternativeName>
        <fullName>Archain</fullName>
    </alternativeName>
    <alternativeName>
        <fullName>Delta-coat protein</fullName>
        <shortName>Delta-COP</shortName>
    </alternativeName>
</protein>
<accession>Q5XJY5</accession>
<accession>Q91W48</accession>
<feature type="chain" id="PRO_0000193842" description="Coatomer subunit delta">
    <location>
        <begin position="1"/>
        <end position="511"/>
    </location>
</feature>
<feature type="domain" description="MHD" evidence="3">
    <location>
        <begin position="271"/>
        <end position="511"/>
    </location>
</feature>
<feature type="region of interest" description="Disordered" evidence="4">
    <location>
        <begin position="168"/>
        <end position="188"/>
    </location>
</feature>
<feature type="compositionally biased region" description="Basic and acidic residues" evidence="4">
    <location>
        <begin position="168"/>
        <end position="177"/>
    </location>
</feature>
<feature type="modified residue" description="Phosphoserine" evidence="2">
    <location>
        <position position="223"/>
    </location>
</feature>
<feature type="modified residue" description="N6-acetyllysine" evidence="2">
    <location>
        <position position="233"/>
    </location>
</feature>
<feature type="modified residue" description="N6-acetyllysine" evidence="6">
    <location>
        <position position="241"/>
    </location>
</feature>
<feature type="modified residue" description="Phosphoserine" evidence="2">
    <location>
        <position position="244"/>
    </location>
</feature>
<feature type="modified residue" description="N6-acetyllysine" evidence="2">
    <location>
        <position position="309"/>
    </location>
</feature>
<feature type="modified residue" description="N6-acetyllysine" evidence="6">
    <location>
        <position position="351"/>
    </location>
</feature>
<feature type="modified residue" description="Phosphoserine" evidence="2">
    <location>
        <position position="493"/>
    </location>
</feature>
<feature type="sequence conflict" description="In Ref. 3; AAH83152." evidence="5" ref="3">
    <original>I</original>
    <variation>T</variation>
    <location>
        <position position="301"/>
    </location>
</feature>
<organism>
    <name type="scientific">Mus musculus</name>
    <name type="common">Mouse</name>
    <dbReference type="NCBI Taxonomy" id="10090"/>
    <lineage>
        <taxon>Eukaryota</taxon>
        <taxon>Metazoa</taxon>
        <taxon>Chordata</taxon>
        <taxon>Craniata</taxon>
        <taxon>Vertebrata</taxon>
        <taxon>Euteleostomi</taxon>
        <taxon>Mammalia</taxon>
        <taxon>Eutheria</taxon>
        <taxon>Euarchontoglires</taxon>
        <taxon>Glires</taxon>
        <taxon>Rodentia</taxon>
        <taxon>Myomorpha</taxon>
        <taxon>Muroidea</taxon>
        <taxon>Muridae</taxon>
        <taxon>Murinae</taxon>
        <taxon>Mus</taxon>
        <taxon>Mus</taxon>
    </lineage>
</organism>